<name>YR865_MIMIV</name>
<comment type="similarity">
    <text evidence="2">Belongs to the mimivirus L5 family.</text>
</comment>
<feature type="chain" id="PRO_0000071380" description="Uncharacterized protein R865">
    <location>
        <begin position="1"/>
        <end position="590"/>
    </location>
</feature>
<feature type="region of interest" description="Disordered" evidence="1">
    <location>
        <begin position="330"/>
        <end position="368"/>
    </location>
</feature>
<feature type="compositionally biased region" description="Acidic residues" evidence="1">
    <location>
        <begin position="336"/>
        <end position="368"/>
    </location>
</feature>
<gene>
    <name type="ordered locus">MIMI_R865</name>
</gene>
<accession>Q5UP18</accession>
<organism>
    <name type="scientific">Acanthamoeba polyphaga mimivirus</name>
    <name type="common">APMV</name>
    <dbReference type="NCBI Taxonomy" id="212035"/>
    <lineage>
        <taxon>Viruses</taxon>
        <taxon>Varidnaviria</taxon>
        <taxon>Bamfordvirae</taxon>
        <taxon>Nucleocytoviricota</taxon>
        <taxon>Megaviricetes</taxon>
        <taxon>Imitervirales</taxon>
        <taxon>Mimiviridae</taxon>
        <taxon>Megamimivirinae</taxon>
        <taxon>Mimivirus</taxon>
        <taxon>Mimivirus bradfordmassiliense</taxon>
    </lineage>
</organism>
<protein>
    <recommendedName>
        <fullName>Uncharacterized protein R865</fullName>
    </recommendedName>
</protein>
<keyword id="KW-1185">Reference proteome</keyword>
<dbReference type="EMBL" id="AY653733">
    <property type="protein sequence ID" value="AAV51123.1"/>
    <property type="molecule type" value="Genomic_DNA"/>
</dbReference>
<dbReference type="Proteomes" id="UP000001134">
    <property type="component" value="Genome"/>
</dbReference>
<organismHost>
    <name type="scientific">Acanthamoeba polyphaga</name>
    <name type="common">Amoeba</name>
    <dbReference type="NCBI Taxonomy" id="5757"/>
</organismHost>
<proteinExistence type="inferred from homology"/>
<sequence>MDTIEPIKICKKMYYSADELKEKCPIFFKGYRNSWSLINADVVDEQCYIFAKYEDGKWIKSTSQSKKFNKVFLLDYWVESNIPEFNSNLEYEITQAPDILKLKNSEKFKDDKGNIIDIEVRGNKNDSECYFLVKDVASGFYIKRLFSILLNFNSGYEIKTHYVYFNIIKQKNDKTIVKKELFLTHLGFVRLIHRSRINNVKYKKTVHRWLSQFKSKTPEKFVLNIEKMSKESRIGFTYLVSSPLLNAVKIGAWRSTLISLRSRYITGYGEDLSLFAIKTADAFALEKKCHKHFTKHKLTNELYDKQHYNEYVIFPKKNKEDYDIELESDIDKSESDIDDSESDIDSENDIDSESDIDDSETDDEEELENPIKTLSSFQYCKNEATDIFGNIKIISDTVDFYLCVSDVEKLIGNKNNYNQDSLIFVKKNYGKELYIKYVGLLEFVFTTNSTKESIVKLRKWMCNTLNTVQMGTKSQKNQLIASMTGVSPEAIKAVFSKTSSTLPCIYFFTIGKVKDLRKSLKISKDYDDEDIIGKYGMTKDLDRRTGEHNDTYGQLPGSDFRLTVFNFIDVQYMSQAETDLKLYMKDTILI</sequence>
<reference key="1">
    <citation type="journal article" date="2004" name="Science">
        <title>The 1.2-megabase genome sequence of Mimivirus.</title>
        <authorList>
            <person name="Raoult D."/>
            <person name="Audic S."/>
            <person name="Robert C."/>
            <person name="Abergel C."/>
            <person name="Renesto P."/>
            <person name="Ogata H."/>
            <person name="La Scola B."/>
            <person name="Susan M."/>
            <person name="Claverie J.-M."/>
        </authorList>
    </citation>
    <scope>NUCLEOTIDE SEQUENCE [LARGE SCALE GENOMIC DNA]</scope>
    <source>
        <strain>Rowbotham-Bradford</strain>
    </source>
</reference>
<evidence type="ECO:0000256" key="1">
    <source>
        <dbReference type="SAM" id="MobiDB-lite"/>
    </source>
</evidence>
<evidence type="ECO:0000305" key="2"/>